<reference key="1">
    <citation type="journal article" date="2000" name="Science">
        <title>The genome sequence of Drosophila melanogaster.</title>
        <authorList>
            <person name="Adams M.D."/>
            <person name="Celniker S.E."/>
            <person name="Holt R.A."/>
            <person name="Evans C.A."/>
            <person name="Gocayne J.D."/>
            <person name="Amanatides P.G."/>
            <person name="Scherer S.E."/>
            <person name="Li P.W."/>
            <person name="Hoskins R.A."/>
            <person name="Galle R.F."/>
            <person name="George R.A."/>
            <person name="Lewis S.E."/>
            <person name="Richards S."/>
            <person name="Ashburner M."/>
            <person name="Henderson S.N."/>
            <person name="Sutton G.G."/>
            <person name="Wortman J.R."/>
            <person name="Yandell M.D."/>
            <person name="Zhang Q."/>
            <person name="Chen L.X."/>
            <person name="Brandon R.C."/>
            <person name="Rogers Y.-H.C."/>
            <person name="Blazej R.G."/>
            <person name="Champe M."/>
            <person name="Pfeiffer B.D."/>
            <person name="Wan K.H."/>
            <person name="Doyle C."/>
            <person name="Baxter E.G."/>
            <person name="Helt G."/>
            <person name="Nelson C.R."/>
            <person name="Miklos G.L.G."/>
            <person name="Abril J.F."/>
            <person name="Agbayani A."/>
            <person name="An H.-J."/>
            <person name="Andrews-Pfannkoch C."/>
            <person name="Baldwin D."/>
            <person name="Ballew R.M."/>
            <person name="Basu A."/>
            <person name="Baxendale J."/>
            <person name="Bayraktaroglu L."/>
            <person name="Beasley E.M."/>
            <person name="Beeson K.Y."/>
            <person name="Benos P.V."/>
            <person name="Berman B.P."/>
            <person name="Bhandari D."/>
            <person name="Bolshakov S."/>
            <person name="Borkova D."/>
            <person name="Botchan M.R."/>
            <person name="Bouck J."/>
            <person name="Brokstein P."/>
            <person name="Brottier P."/>
            <person name="Burtis K.C."/>
            <person name="Busam D.A."/>
            <person name="Butler H."/>
            <person name="Cadieu E."/>
            <person name="Center A."/>
            <person name="Chandra I."/>
            <person name="Cherry J.M."/>
            <person name="Cawley S."/>
            <person name="Dahlke C."/>
            <person name="Davenport L.B."/>
            <person name="Davies P."/>
            <person name="de Pablos B."/>
            <person name="Delcher A."/>
            <person name="Deng Z."/>
            <person name="Mays A.D."/>
            <person name="Dew I."/>
            <person name="Dietz S.M."/>
            <person name="Dodson K."/>
            <person name="Doup L.E."/>
            <person name="Downes M."/>
            <person name="Dugan-Rocha S."/>
            <person name="Dunkov B.C."/>
            <person name="Dunn P."/>
            <person name="Durbin K.J."/>
            <person name="Evangelista C.C."/>
            <person name="Ferraz C."/>
            <person name="Ferriera S."/>
            <person name="Fleischmann W."/>
            <person name="Fosler C."/>
            <person name="Gabrielian A.E."/>
            <person name="Garg N.S."/>
            <person name="Gelbart W.M."/>
            <person name="Glasser K."/>
            <person name="Glodek A."/>
            <person name="Gong F."/>
            <person name="Gorrell J.H."/>
            <person name="Gu Z."/>
            <person name="Guan P."/>
            <person name="Harris M."/>
            <person name="Harris N.L."/>
            <person name="Harvey D.A."/>
            <person name="Heiman T.J."/>
            <person name="Hernandez J.R."/>
            <person name="Houck J."/>
            <person name="Hostin D."/>
            <person name="Houston K.A."/>
            <person name="Howland T.J."/>
            <person name="Wei M.-H."/>
            <person name="Ibegwam C."/>
            <person name="Jalali M."/>
            <person name="Kalush F."/>
            <person name="Karpen G.H."/>
            <person name="Ke Z."/>
            <person name="Kennison J.A."/>
            <person name="Ketchum K.A."/>
            <person name="Kimmel B.E."/>
            <person name="Kodira C.D."/>
            <person name="Kraft C.L."/>
            <person name="Kravitz S."/>
            <person name="Kulp D."/>
            <person name="Lai Z."/>
            <person name="Lasko P."/>
            <person name="Lei Y."/>
            <person name="Levitsky A.A."/>
            <person name="Li J.H."/>
            <person name="Li Z."/>
            <person name="Liang Y."/>
            <person name="Lin X."/>
            <person name="Liu X."/>
            <person name="Mattei B."/>
            <person name="McIntosh T.C."/>
            <person name="McLeod M.P."/>
            <person name="McPherson D."/>
            <person name="Merkulov G."/>
            <person name="Milshina N.V."/>
            <person name="Mobarry C."/>
            <person name="Morris J."/>
            <person name="Moshrefi A."/>
            <person name="Mount S.M."/>
            <person name="Moy M."/>
            <person name="Murphy B."/>
            <person name="Murphy L."/>
            <person name="Muzny D.M."/>
            <person name="Nelson D.L."/>
            <person name="Nelson D.R."/>
            <person name="Nelson K.A."/>
            <person name="Nixon K."/>
            <person name="Nusskern D.R."/>
            <person name="Pacleb J.M."/>
            <person name="Palazzolo M."/>
            <person name="Pittman G.S."/>
            <person name="Pan S."/>
            <person name="Pollard J."/>
            <person name="Puri V."/>
            <person name="Reese M.G."/>
            <person name="Reinert K."/>
            <person name="Remington K."/>
            <person name="Saunders R.D.C."/>
            <person name="Scheeler F."/>
            <person name="Shen H."/>
            <person name="Shue B.C."/>
            <person name="Siden-Kiamos I."/>
            <person name="Simpson M."/>
            <person name="Skupski M.P."/>
            <person name="Smith T.J."/>
            <person name="Spier E."/>
            <person name="Spradling A.C."/>
            <person name="Stapleton M."/>
            <person name="Strong R."/>
            <person name="Sun E."/>
            <person name="Svirskas R."/>
            <person name="Tector C."/>
            <person name="Turner R."/>
            <person name="Venter E."/>
            <person name="Wang A.H."/>
            <person name="Wang X."/>
            <person name="Wang Z.-Y."/>
            <person name="Wassarman D.A."/>
            <person name="Weinstock G.M."/>
            <person name="Weissenbach J."/>
            <person name="Williams S.M."/>
            <person name="Woodage T."/>
            <person name="Worley K.C."/>
            <person name="Wu D."/>
            <person name="Yang S."/>
            <person name="Yao Q.A."/>
            <person name="Ye J."/>
            <person name="Yeh R.-F."/>
            <person name="Zaveri J.S."/>
            <person name="Zhan M."/>
            <person name="Zhang G."/>
            <person name="Zhao Q."/>
            <person name="Zheng L."/>
            <person name="Zheng X.H."/>
            <person name="Zhong F.N."/>
            <person name="Zhong W."/>
            <person name="Zhou X."/>
            <person name="Zhu S.C."/>
            <person name="Zhu X."/>
            <person name="Smith H.O."/>
            <person name="Gibbs R.A."/>
            <person name="Myers E.W."/>
            <person name="Rubin G.M."/>
            <person name="Venter J.C."/>
        </authorList>
    </citation>
    <scope>NUCLEOTIDE SEQUENCE [LARGE SCALE GENOMIC DNA]</scope>
    <source>
        <strain>Berkeley</strain>
    </source>
</reference>
<reference key="2">
    <citation type="journal article" date="2002" name="Genome Biol.">
        <title>Annotation of the Drosophila melanogaster euchromatic genome: a systematic review.</title>
        <authorList>
            <person name="Misra S."/>
            <person name="Crosby M.A."/>
            <person name="Mungall C.J."/>
            <person name="Matthews B.B."/>
            <person name="Campbell K.S."/>
            <person name="Hradecky P."/>
            <person name="Huang Y."/>
            <person name="Kaminker J.S."/>
            <person name="Millburn G.H."/>
            <person name="Prochnik S.E."/>
            <person name="Smith C.D."/>
            <person name="Tupy J.L."/>
            <person name="Whitfield E.J."/>
            <person name="Bayraktaroglu L."/>
            <person name="Berman B.P."/>
            <person name="Bettencourt B.R."/>
            <person name="Celniker S.E."/>
            <person name="de Grey A.D.N.J."/>
            <person name="Drysdale R.A."/>
            <person name="Harris N.L."/>
            <person name="Richter J."/>
            <person name="Russo S."/>
            <person name="Schroeder A.J."/>
            <person name="Shu S.Q."/>
            <person name="Stapleton M."/>
            <person name="Yamada C."/>
            <person name="Ashburner M."/>
            <person name="Gelbart W.M."/>
            <person name="Rubin G.M."/>
            <person name="Lewis S.E."/>
        </authorList>
    </citation>
    <scope>GENOME REANNOTATION</scope>
    <scope>ALTERNATIVE SPLICING</scope>
    <source>
        <strain>Berkeley</strain>
    </source>
</reference>
<reference key="3">
    <citation type="submission" date="2003-01" db="EMBL/GenBank/DDBJ databases">
        <authorList>
            <person name="Stapleton M."/>
            <person name="Brokstein P."/>
            <person name="Hong L."/>
            <person name="Agbayani A."/>
            <person name="Carlson J.W."/>
            <person name="Champe M."/>
            <person name="Chavez C."/>
            <person name="Dorsett V."/>
            <person name="Dresnek D."/>
            <person name="Farfan D."/>
            <person name="Frise E."/>
            <person name="George R.A."/>
            <person name="Gonzalez M."/>
            <person name="Guarin H."/>
            <person name="Kronmiller B."/>
            <person name="Li P.W."/>
            <person name="Liao G."/>
            <person name="Miranda A."/>
            <person name="Mungall C.J."/>
            <person name="Nunoo J."/>
            <person name="Pacleb J.M."/>
            <person name="Paragas V."/>
            <person name="Park S."/>
            <person name="Patel S."/>
            <person name="Phouanenavong S."/>
            <person name="Wan K.H."/>
            <person name="Yu C."/>
            <person name="Lewis S.E."/>
            <person name="Rubin G.M."/>
            <person name="Celniker S.E."/>
        </authorList>
    </citation>
    <scope>NUCLEOTIDE SEQUENCE [LARGE SCALE MRNA] (ISOFORM A)</scope>
    <source>
        <strain>Berkeley</strain>
        <tissue>Embryo</tissue>
    </source>
</reference>
<keyword id="KW-0025">Alternative splicing</keyword>
<keyword id="KW-0256">Endoplasmic reticulum</keyword>
<keyword id="KW-0325">Glycoprotein</keyword>
<keyword id="KW-0328">Glycosyltransferase</keyword>
<keyword id="KW-0337">GPI-anchor biosynthesis</keyword>
<keyword id="KW-0472">Membrane</keyword>
<keyword id="KW-1185">Reference proteome</keyword>
<keyword id="KW-0808">Transferase</keyword>
<keyword id="KW-0812">Transmembrane</keyword>
<keyword id="KW-1133">Transmembrane helix</keyword>
<name>PIGB_DROME</name>
<feature type="chain" id="PRO_0000246255" description="GPI mannosyltransferase 3">
    <location>
        <begin position="1"/>
        <end position="561"/>
    </location>
</feature>
<feature type="transmembrane region" description="Helical" evidence="2">
    <location>
        <begin position="3"/>
        <end position="25"/>
    </location>
</feature>
<feature type="transmembrane region" description="Helical" evidence="2">
    <location>
        <begin position="64"/>
        <end position="84"/>
    </location>
</feature>
<feature type="transmembrane region" description="Helical" evidence="2">
    <location>
        <begin position="110"/>
        <end position="130"/>
    </location>
</feature>
<feature type="transmembrane region" description="Helical" evidence="2">
    <location>
        <begin position="155"/>
        <end position="175"/>
    </location>
</feature>
<feature type="transmembrane region" description="Helical" evidence="2">
    <location>
        <begin position="195"/>
        <end position="215"/>
    </location>
</feature>
<feature type="transmembrane region" description="Helical" evidence="2">
    <location>
        <begin position="246"/>
        <end position="266"/>
    </location>
</feature>
<feature type="transmembrane region" description="Helical" evidence="2">
    <location>
        <begin position="275"/>
        <end position="295"/>
    </location>
</feature>
<feature type="transmembrane region" description="Helical" evidence="2">
    <location>
        <begin position="328"/>
        <end position="348"/>
    </location>
</feature>
<feature type="region of interest" description="Disordered" evidence="3">
    <location>
        <begin position="525"/>
        <end position="546"/>
    </location>
</feature>
<feature type="compositionally biased region" description="Basic and acidic residues" evidence="3">
    <location>
        <begin position="535"/>
        <end position="546"/>
    </location>
</feature>
<feature type="glycosylation site" description="N-linked (GlcNAc...) asparagine" evidence="2">
    <location>
        <position position="398"/>
    </location>
</feature>
<feature type="glycosylation site" description="N-linked (GlcNAc...) asparagine" evidence="2">
    <location>
        <position position="456"/>
    </location>
</feature>
<feature type="splice variant" id="VSP_019841" description="In isoform B." evidence="4">
    <location>
        <begin position="475"/>
        <end position="504"/>
    </location>
</feature>
<dbReference type="EC" id="2.4.1.-"/>
<dbReference type="EMBL" id="AE014296">
    <property type="protein sequence ID" value="AAF47795.2"/>
    <property type="molecule type" value="Genomic_DNA"/>
</dbReference>
<dbReference type="EMBL" id="AE014296">
    <property type="protein sequence ID" value="AAS64961.1"/>
    <property type="molecule type" value="Genomic_DNA"/>
</dbReference>
<dbReference type="EMBL" id="BT003240">
    <property type="protein sequence ID" value="AAO24997.1"/>
    <property type="molecule type" value="mRNA"/>
</dbReference>
<dbReference type="RefSeq" id="NP_647832.1">
    <molecule id="Q9VZM5-1"/>
    <property type="nucleotide sequence ID" value="NM_139575.3"/>
</dbReference>
<dbReference type="RefSeq" id="NP_995991.1">
    <molecule id="Q9VZM5-2"/>
    <property type="nucleotide sequence ID" value="NM_206269.3"/>
</dbReference>
<dbReference type="BioGRID" id="63936">
    <property type="interactions" value="6"/>
</dbReference>
<dbReference type="FunCoup" id="Q9VZM5">
    <property type="interactions" value="2004"/>
</dbReference>
<dbReference type="IntAct" id="Q9VZM5">
    <property type="interactions" value="7"/>
</dbReference>
<dbReference type="STRING" id="7227.FBpp0073008"/>
<dbReference type="CAZy" id="GT22">
    <property type="family name" value="Glycosyltransferase Family 22"/>
</dbReference>
<dbReference type="GlyCosmos" id="Q9VZM5">
    <property type="glycosylation" value="2 sites, No reported glycans"/>
</dbReference>
<dbReference type="GlyGen" id="Q9VZM5">
    <property type="glycosylation" value="2 sites"/>
</dbReference>
<dbReference type="PaxDb" id="7227-FBpp0073008"/>
<dbReference type="DNASU" id="38446"/>
<dbReference type="EnsemblMetazoa" id="FBtr0073149">
    <molecule id="Q9VZM5-1"/>
    <property type="protein sequence ID" value="FBpp0073008"/>
    <property type="gene ID" value="FBgn0035464"/>
</dbReference>
<dbReference type="EnsemblMetazoa" id="FBtr0073150">
    <molecule id="Q9VZM5-2"/>
    <property type="protein sequence ID" value="FBpp0073009"/>
    <property type="gene ID" value="FBgn0035464"/>
</dbReference>
<dbReference type="GeneID" id="38446"/>
<dbReference type="KEGG" id="dme:Dmel_CG12006"/>
<dbReference type="UCSC" id="CG12006-RA">
    <molecule id="Q9VZM5-1"/>
    <property type="organism name" value="d. melanogaster"/>
</dbReference>
<dbReference type="AGR" id="FB:FBgn0035464"/>
<dbReference type="CTD" id="38446"/>
<dbReference type="FlyBase" id="FBgn0035464">
    <property type="gene designation" value="PIG-B"/>
</dbReference>
<dbReference type="VEuPathDB" id="VectorBase:FBgn0035464"/>
<dbReference type="eggNOG" id="KOG1771">
    <property type="taxonomic scope" value="Eukaryota"/>
</dbReference>
<dbReference type="GeneTree" id="ENSGT00950000183090"/>
<dbReference type="InParanoid" id="Q9VZM5"/>
<dbReference type="OMA" id="HHMVFNN"/>
<dbReference type="OrthoDB" id="416834at2759"/>
<dbReference type="PhylomeDB" id="Q9VZM5"/>
<dbReference type="Reactome" id="R-DME-162710">
    <property type="pathway name" value="Synthesis of glycosylphosphatidylinositol (GPI)"/>
</dbReference>
<dbReference type="UniPathway" id="UPA00196"/>
<dbReference type="BioGRID-ORCS" id="38446">
    <property type="hits" value="0 hits in 1 CRISPR screen"/>
</dbReference>
<dbReference type="ChiTaRS" id="CG12006">
    <property type="organism name" value="fly"/>
</dbReference>
<dbReference type="GenomeRNAi" id="38446"/>
<dbReference type="PRO" id="PR:Q9VZM5"/>
<dbReference type="Proteomes" id="UP000000803">
    <property type="component" value="Chromosome 3L"/>
</dbReference>
<dbReference type="Bgee" id="FBgn0035464">
    <property type="expression patterns" value="Expressed in distal medullary amacrine neuron Dm11 in insect head and 97 other cell types or tissues"/>
</dbReference>
<dbReference type="GO" id="GO:0005789">
    <property type="term" value="C:endoplasmic reticulum membrane"/>
    <property type="evidence" value="ECO:0000250"/>
    <property type="project" value="UniProtKB"/>
</dbReference>
<dbReference type="GO" id="GO:0000026">
    <property type="term" value="F:alpha-1,2-mannosyltransferase activity"/>
    <property type="evidence" value="ECO:0000250"/>
    <property type="project" value="UniProtKB"/>
</dbReference>
<dbReference type="GO" id="GO:0006506">
    <property type="term" value="P:GPI anchor biosynthetic process"/>
    <property type="evidence" value="ECO:0000250"/>
    <property type="project" value="UniProtKB"/>
</dbReference>
<dbReference type="InterPro" id="IPR005599">
    <property type="entry name" value="GPI_mannosylTrfase"/>
</dbReference>
<dbReference type="PANTHER" id="PTHR22760">
    <property type="entry name" value="GLYCOSYLTRANSFERASE"/>
    <property type="match status" value="1"/>
</dbReference>
<dbReference type="PANTHER" id="PTHR22760:SF4">
    <property type="entry name" value="GPI MANNOSYLTRANSFERASE 3"/>
    <property type="match status" value="1"/>
</dbReference>
<dbReference type="Pfam" id="PF03901">
    <property type="entry name" value="Glyco_transf_22"/>
    <property type="match status" value="1"/>
</dbReference>
<evidence type="ECO:0000250" key="1"/>
<evidence type="ECO:0000255" key="2"/>
<evidence type="ECO:0000256" key="3">
    <source>
        <dbReference type="SAM" id="MobiDB-lite"/>
    </source>
</evidence>
<evidence type="ECO:0000305" key="4"/>
<evidence type="ECO:0000312" key="5">
    <source>
        <dbReference type="FlyBase" id="FBgn0035464"/>
    </source>
</evidence>
<comment type="function">
    <text evidence="1">Mannosyltransferase involved in glycosylphosphatidylinositol-anchor biosynthesis. Transfers the third alpha-1,2-mannose to Man2-GlcN-acyl-PI during GPI precursor assembly (By similarity).</text>
</comment>
<comment type="pathway">
    <text>Glycolipid biosynthesis; glycosylphosphatidylinositol-anchor biosynthesis.</text>
</comment>
<comment type="subcellular location">
    <subcellularLocation>
        <location evidence="1">Endoplasmic reticulum membrane</location>
        <topology evidence="1">Multi-pass membrane protein</topology>
    </subcellularLocation>
</comment>
<comment type="alternative products">
    <event type="alternative splicing"/>
    <isoform>
        <id>Q9VZM5-1</id>
        <name>A</name>
        <sequence type="displayed"/>
    </isoform>
    <isoform>
        <id>Q9VZM5-2</id>
        <name>B</name>
        <sequence type="described" ref="VSP_019841"/>
    </isoform>
</comment>
<comment type="similarity">
    <text evidence="4">Belongs to the glycosyltransferase 22 family. PIGB subfamily.</text>
</comment>
<sequence>MKLIYVFLLILAVRLASVFVVQTYYVPDEYWQSLEVAHKLTFGYGYLTWEWVQGIRSYVYPLLIAGLYKILALLQLDSAHLLVVLPRIVQALLSAYSDYRFFVWTGKRKWALFLILVPWFWFYTGSRTLANTLEASLTTIALSYFPWYGESTAYLWPAAICCFLRPTAAVIWLPLSLYHLRRSRQNVLELILKRFVLIGLLVAGLGIAIDTYWHGQLIVTPYEFLKYNIFNNIGSFYGSHPWHWYFSVGLPTVLGINTLPFIFGVMETVKKSEKYPVSKQLLITIFLTLVVLSAVEHKEFRFVSPLLPLCLYVITDALSRWSIRASSTMLWTTALVILVGNVMPAWYLSTVHQKGPIELMPKLREIAREYRDEREHQANILFLMPCHSTPYYSHIHQNVTMRFLTCEPNLEKKEQYKDEADRFFEDPVHWINSHIPMHPLTALPTHVVLFDPLAENISVFLRNYRLLHRIEHAEVTRLEGSQALVDQWSEALGAQSPNLASLLQNRQSRTGRSILVYQRLKKGEENAFNRGPDSGQHEPDVHDHPPLEDLVLANENENLFN</sequence>
<proteinExistence type="evidence at transcript level"/>
<organism>
    <name type="scientific">Drosophila melanogaster</name>
    <name type="common">Fruit fly</name>
    <dbReference type="NCBI Taxonomy" id="7227"/>
    <lineage>
        <taxon>Eukaryota</taxon>
        <taxon>Metazoa</taxon>
        <taxon>Ecdysozoa</taxon>
        <taxon>Arthropoda</taxon>
        <taxon>Hexapoda</taxon>
        <taxon>Insecta</taxon>
        <taxon>Pterygota</taxon>
        <taxon>Neoptera</taxon>
        <taxon>Endopterygota</taxon>
        <taxon>Diptera</taxon>
        <taxon>Brachycera</taxon>
        <taxon>Muscomorpha</taxon>
        <taxon>Ephydroidea</taxon>
        <taxon>Drosophilidae</taxon>
        <taxon>Drosophila</taxon>
        <taxon>Sophophora</taxon>
    </lineage>
</organism>
<protein>
    <recommendedName>
        <fullName>GPI mannosyltransferase 3</fullName>
        <ecNumber>2.4.1.-</ecNumber>
    </recommendedName>
    <alternativeName>
        <fullName>GPI mannosyltransferase III</fullName>
        <shortName>GPI-MT-III</shortName>
    </alternativeName>
    <alternativeName>
        <fullName evidence="5">Phosphatidylinositol-glycan biosynthesis class B protein</fullName>
    </alternativeName>
</protein>
<accession>Q9VZM5</accession>
<accession>Q7KV63</accession>
<gene>
    <name evidence="5" type="primary">PIG-B</name>
    <name evidence="5" type="ORF">CG12006</name>
</gene>